<evidence type="ECO:0000255" key="1">
    <source>
        <dbReference type="HAMAP-Rule" id="MF_00105"/>
    </source>
</evidence>
<reference key="1">
    <citation type="journal article" date="2002" name="Lancet">
        <title>Genome and virulence determinants of high virulence community-acquired MRSA.</title>
        <authorList>
            <person name="Baba T."/>
            <person name="Takeuchi F."/>
            <person name="Kuroda M."/>
            <person name="Yuzawa H."/>
            <person name="Aoki K."/>
            <person name="Oguchi A."/>
            <person name="Nagai Y."/>
            <person name="Iwama N."/>
            <person name="Asano K."/>
            <person name="Naimi T."/>
            <person name="Kuroda H."/>
            <person name="Cui L."/>
            <person name="Yamamoto K."/>
            <person name="Hiramatsu K."/>
        </authorList>
    </citation>
    <scope>NUCLEOTIDE SEQUENCE [LARGE SCALE GENOMIC DNA]</scope>
    <source>
        <strain>MW2</strain>
    </source>
</reference>
<protein>
    <recommendedName>
        <fullName evidence="1">Transcription elongation factor GreA</fullName>
    </recommendedName>
    <alternativeName>
        <fullName evidence="1">Transcript cleavage factor GreA</fullName>
    </alternativeName>
</protein>
<dbReference type="EMBL" id="BA000033">
    <property type="protein sequence ID" value="BAB95425.1"/>
    <property type="molecule type" value="Genomic_DNA"/>
</dbReference>
<dbReference type="RefSeq" id="WP_000431312.1">
    <property type="nucleotide sequence ID" value="NC_003923.1"/>
</dbReference>
<dbReference type="SMR" id="P64284"/>
<dbReference type="KEGG" id="sam:MW1560"/>
<dbReference type="HOGENOM" id="CLU_101379_2_1_9"/>
<dbReference type="GO" id="GO:0003677">
    <property type="term" value="F:DNA binding"/>
    <property type="evidence" value="ECO:0007669"/>
    <property type="project" value="UniProtKB-UniRule"/>
</dbReference>
<dbReference type="GO" id="GO:0070063">
    <property type="term" value="F:RNA polymerase binding"/>
    <property type="evidence" value="ECO:0007669"/>
    <property type="project" value="InterPro"/>
</dbReference>
<dbReference type="GO" id="GO:0006354">
    <property type="term" value="P:DNA-templated transcription elongation"/>
    <property type="evidence" value="ECO:0007669"/>
    <property type="project" value="TreeGrafter"/>
</dbReference>
<dbReference type="GO" id="GO:0032784">
    <property type="term" value="P:regulation of DNA-templated transcription elongation"/>
    <property type="evidence" value="ECO:0007669"/>
    <property type="project" value="UniProtKB-UniRule"/>
</dbReference>
<dbReference type="FunFam" id="1.10.287.180:FF:000001">
    <property type="entry name" value="Transcription elongation factor GreA"/>
    <property type="match status" value="1"/>
</dbReference>
<dbReference type="FunFam" id="3.10.50.30:FF:000001">
    <property type="entry name" value="Transcription elongation factor GreA"/>
    <property type="match status" value="1"/>
</dbReference>
<dbReference type="Gene3D" id="3.10.50.30">
    <property type="entry name" value="Transcription elongation factor, GreA/GreB, C-terminal domain"/>
    <property type="match status" value="1"/>
</dbReference>
<dbReference type="Gene3D" id="1.10.287.180">
    <property type="entry name" value="Transcription elongation factor, GreA/GreB, N-terminal domain"/>
    <property type="match status" value="1"/>
</dbReference>
<dbReference type="HAMAP" id="MF_00105">
    <property type="entry name" value="GreA_GreB"/>
    <property type="match status" value="1"/>
</dbReference>
<dbReference type="InterPro" id="IPR036953">
    <property type="entry name" value="GreA/GreB_C_sf"/>
</dbReference>
<dbReference type="InterPro" id="IPR018151">
    <property type="entry name" value="TF_GreA/GreB_CS"/>
</dbReference>
<dbReference type="InterPro" id="IPR006359">
    <property type="entry name" value="Tscrpt_elong_fac_GreA"/>
</dbReference>
<dbReference type="InterPro" id="IPR028624">
    <property type="entry name" value="Tscrpt_elong_fac_GreA/B"/>
</dbReference>
<dbReference type="InterPro" id="IPR001437">
    <property type="entry name" value="Tscrpt_elong_fac_GreA/B_C"/>
</dbReference>
<dbReference type="InterPro" id="IPR023459">
    <property type="entry name" value="Tscrpt_elong_fac_GreA/B_fam"/>
</dbReference>
<dbReference type="InterPro" id="IPR022691">
    <property type="entry name" value="Tscrpt_elong_fac_GreA/B_N"/>
</dbReference>
<dbReference type="InterPro" id="IPR036805">
    <property type="entry name" value="Tscrpt_elong_fac_GreA/B_N_sf"/>
</dbReference>
<dbReference type="NCBIfam" id="TIGR01462">
    <property type="entry name" value="greA"/>
    <property type="match status" value="1"/>
</dbReference>
<dbReference type="NCBIfam" id="NF001261">
    <property type="entry name" value="PRK00226.1-2"/>
    <property type="match status" value="1"/>
</dbReference>
<dbReference type="NCBIfam" id="NF001263">
    <property type="entry name" value="PRK00226.1-4"/>
    <property type="match status" value="1"/>
</dbReference>
<dbReference type="PANTHER" id="PTHR30437">
    <property type="entry name" value="TRANSCRIPTION ELONGATION FACTOR GREA"/>
    <property type="match status" value="1"/>
</dbReference>
<dbReference type="PANTHER" id="PTHR30437:SF4">
    <property type="entry name" value="TRANSCRIPTION ELONGATION FACTOR GREA"/>
    <property type="match status" value="1"/>
</dbReference>
<dbReference type="Pfam" id="PF01272">
    <property type="entry name" value="GreA_GreB"/>
    <property type="match status" value="1"/>
</dbReference>
<dbReference type="Pfam" id="PF03449">
    <property type="entry name" value="GreA_GreB_N"/>
    <property type="match status" value="1"/>
</dbReference>
<dbReference type="PIRSF" id="PIRSF006092">
    <property type="entry name" value="GreA_GreB"/>
    <property type="match status" value="1"/>
</dbReference>
<dbReference type="SUPFAM" id="SSF54534">
    <property type="entry name" value="FKBP-like"/>
    <property type="match status" value="1"/>
</dbReference>
<dbReference type="SUPFAM" id="SSF46557">
    <property type="entry name" value="GreA transcript cleavage protein, N-terminal domain"/>
    <property type="match status" value="1"/>
</dbReference>
<dbReference type="PROSITE" id="PS00829">
    <property type="entry name" value="GREAB_1"/>
    <property type="match status" value="1"/>
</dbReference>
<dbReference type="PROSITE" id="PS00830">
    <property type="entry name" value="GREAB_2"/>
    <property type="match status" value="1"/>
</dbReference>
<sequence length="158" mass="17743">MENQKQYPMTQEGFEKLERELEELKTVKRPEVVEKIKVARSFGDLSENSEYDAAKDEQGFIEQDIQRIEHMLRNALIIEDTGDNNVVKIGKTVTFVELPGDEEESYQIVGSAESDAFNGKISNESPMAKALIGKGLDDEVRVPLPNGGEMNVKIVNIQ</sequence>
<gene>
    <name evidence="1" type="primary">greA</name>
    <name type="ordered locus">MW1560</name>
</gene>
<name>GREA_STAAW</name>
<proteinExistence type="inferred from homology"/>
<organism>
    <name type="scientific">Staphylococcus aureus (strain MW2)</name>
    <dbReference type="NCBI Taxonomy" id="196620"/>
    <lineage>
        <taxon>Bacteria</taxon>
        <taxon>Bacillati</taxon>
        <taxon>Bacillota</taxon>
        <taxon>Bacilli</taxon>
        <taxon>Bacillales</taxon>
        <taxon>Staphylococcaceae</taxon>
        <taxon>Staphylococcus</taxon>
    </lineage>
</organism>
<accession>P64284</accession>
<accession>Q99TN9</accession>
<comment type="function">
    <text evidence="1">Necessary for efficient RNA polymerase transcription elongation past template-encoded arresting sites. The arresting sites in DNA have the property of trapping a certain fraction of elongating RNA polymerases that pass through, resulting in locked ternary complexes. Cleavage of the nascent transcript by cleavage factors such as GreA or GreB allows the resumption of elongation from the new 3'terminus. GreA releases sequences of 2 to 3 nucleotides.</text>
</comment>
<comment type="similarity">
    <text evidence="1">Belongs to the GreA/GreB family.</text>
</comment>
<feature type="chain" id="PRO_0000176975" description="Transcription elongation factor GreA">
    <location>
        <begin position="1"/>
        <end position="158"/>
    </location>
</feature>
<feature type="coiled-coil region" evidence="1">
    <location>
        <begin position="4"/>
        <end position="70"/>
    </location>
</feature>
<keyword id="KW-0175">Coiled coil</keyword>
<keyword id="KW-0238">DNA-binding</keyword>
<keyword id="KW-0804">Transcription</keyword>
<keyword id="KW-0805">Transcription regulation</keyword>